<sequence>MHAVQRQIAEQLKVQPPFADQNALQAEVARRVGFIKDCLQNARLKTLVLGISGGVDSLTAGLLAQRAVKELRESTGDTRYRFIAVRLPYVVQADEHEAQASVDFIEPDERHTINIGSSVKALAAEVKAFDGLPASSVDFVLGNTKARMRMVAQYTVAGAYQGLVIGTDHAAEAVMGFFTKFGDGACDLAPLSGLVKNQVRAIARHFGAPESLVEKVPTADLEDLSPGKPDEASHGVTYAEIDAFLHGEPVREEAFRIICETYAKTQHKRELPYAP</sequence>
<reference key="1">
    <citation type="journal article" date="2003" name="Proc. Natl. Acad. Sci. U.S.A.">
        <title>The complete genome sequence of the Arabidopsis and tomato pathogen Pseudomonas syringae pv. tomato DC3000.</title>
        <authorList>
            <person name="Buell C.R."/>
            <person name="Joardar V."/>
            <person name="Lindeberg M."/>
            <person name="Selengut J."/>
            <person name="Paulsen I.T."/>
            <person name="Gwinn M.L."/>
            <person name="Dodson R.J."/>
            <person name="DeBoy R.T."/>
            <person name="Durkin A.S."/>
            <person name="Kolonay J.F."/>
            <person name="Madupu R."/>
            <person name="Daugherty S.C."/>
            <person name="Brinkac L.M."/>
            <person name="Beanan M.J."/>
            <person name="Haft D.H."/>
            <person name="Nelson W.C."/>
            <person name="Davidsen T.M."/>
            <person name="Zafar N."/>
            <person name="Zhou L."/>
            <person name="Liu J."/>
            <person name="Yuan Q."/>
            <person name="Khouri H.M."/>
            <person name="Fedorova N.B."/>
            <person name="Tran B."/>
            <person name="Russell D."/>
            <person name="Berry K.J."/>
            <person name="Utterback T.R."/>
            <person name="Van Aken S.E."/>
            <person name="Feldblyum T.V."/>
            <person name="D'Ascenzo M."/>
            <person name="Deng W.-L."/>
            <person name="Ramos A.R."/>
            <person name="Alfano J.R."/>
            <person name="Cartinhour S."/>
            <person name="Chatterjee A.K."/>
            <person name="Delaney T.P."/>
            <person name="Lazarowitz S.G."/>
            <person name="Martin G.B."/>
            <person name="Schneider D.J."/>
            <person name="Tang X."/>
            <person name="Bender C.L."/>
            <person name="White O."/>
            <person name="Fraser C.M."/>
            <person name="Collmer A."/>
        </authorList>
    </citation>
    <scope>NUCLEOTIDE SEQUENCE [LARGE SCALE GENOMIC DNA]</scope>
    <source>
        <strain>ATCC BAA-871 / DC3000</strain>
    </source>
</reference>
<proteinExistence type="inferred from homology"/>
<comment type="function">
    <text evidence="1">Catalyzes the ATP-dependent amidation of deamido-NAD to form NAD. Uses ammonia as a nitrogen source.</text>
</comment>
<comment type="catalytic activity">
    <reaction evidence="1">
        <text>deamido-NAD(+) + NH4(+) + ATP = AMP + diphosphate + NAD(+) + H(+)</text>
        <dbReference type="Rhea" id="RHEA:21188"/>
        <dbReference type="ChEBI" id="CHEBI:15378"/>
        <dbReference type="ChEBI" id="CHEBI:28938"/>
        <dbReference type="ChEBI" id="CHEBI:30616"/>
        <dbReference type="ChEBI" id="CHEBI:33019"/>
        <dbReference type="ChEBI" id="CHEBI:57540"/>
        <dbReference type="ChEBI" id="CHEBI:58437"/>
        <dbReference type="ChEBI" id="CHEBI:456215"/>
        <dbReference type="EC" id="6.3.1.5"/>
    </reaction>
</comment>
<comment type="pathway">
    <text evidence="1">Cofactor biosynthesis; NAD(+) biosynthesis; NAD(+) from deamido-NAD(+) (ammonia route): step 1/1.</text>
</comment>
<comment type="subunit">
    <text evidence="1">Homodimer.</text>
</comment>
<comment type="similarity">
    <text evidence="1">Belongs to the NAD synthetase family.</text>
</comment>
<evidence type="ECO:0000255" key="1">
    <source>
        <dbReference type="HAMAP-Rule" id="MF_00193"/>
    </source>
</evidence>
<gene>
    <name evidence="1" type="primary">nadE</name>
    <name type="ordered locus">PSPTO_4922</name>
</gene>
<organism>
    <name type="scientific">Pseudomonas syringae pv. tomato (strain ATCC BAA-871 / DC3000)</name>
    <dbReference type="NCBI Taxonomy" id="223283"/>
    <lineage>
        <taxon>Bacteria</taxon>
        <taxon>Pseudomonadati</taxon>
        <taxon>Pseudomonadota</taxon>
        <taxon>Gammaproteobacteria</taxon>
        <taxon>Pseudomonadales</taxon>
        <taxon>Pseudomonadaceae</taxon>
        <taxon>Pseudomonas</taxon>
    </lineage>
</organism>
<feature type="chain" id="PRO_0000152187" description="NH(3)-dependent NAD(+) synthetase">
    <location>
        <begin position="1"/>
        <end position="275"/>
    </location>
</feature>
<feature type="binding site" evidence="1">
    <location>
        <begin position="50"/>
        <end position="57"/>
    </location>
    <ligand>
        <name>ATP</name>
        <dbReference type="ChEBI" id="CHEBI:30616"/>
    </ligand>
</feature>
<feature type="binding site" evidence="1">
    <location>
        <position position="56"/>
    </location>
    <ligand>
        <name>Mg(2+)</name>
        <dbReference type="ChEBI" id="CHEBI:18420"/>
    </ligand>
</feature>
<feature type="binding site" evidence="1">
    <location>
        <position position="147"/>
    </location>
    <ligand>
        <name>deamido-NAD(+)</name>
        <dbReference type="ChEBI" id="CHEBI:58437"/>
    </ligand>
</feature>
<feature type="binding site" evidence="1">
    <location>
        <position position="167"/>
    </location>
    <ligand>
        <name>ATP</name>
        <dbReference type="ChEBI" id="CHEBI:30616"/>
    </ligand>
</feature>
<feature type="binding site" evidence="1">
    <location>
        <position position="172"/>
    </location>
    <ligand>
        <name>Mg(2+)</name>
        <dbReference type="ChEBI" id="CHEBI:18420"/>
    </ligand>
</feature>
<feature type="binding site" evidence="1">
    <location>
        <position position="180"/>
    </location>
    <ligand>
        <name>deamido-NAD(+)</name>
        <dbReference type="ChEBI" id="CHEBI:58437"/>
    </ligand>
</feature>
<feature type="binding site" evidence="1">
    <location>
        <position position="187"/>
    </location>
    <ligand>
        <name>deamido-NAD(+)</name>
        <dbReference type="ChEBI" id="CHEBI:58437"/>
    </ligand>
</feature>
<feature type="binding site" evidence="1">
    <location>
        <position position="196"/>
    </location>
    <ligand>
        <name>ATP</name>
        <dbReference type="ChEBI" id="CHEBI:30616"/>
    </ligand>
</feature>
<feature type="binding site" evidence="1">
    <location>
        <position position="218"/>
    </location>
    <ligand>
        <name>ATP</name>
        <dbReference type="ChEBI" id="CHEBI:30616"/>
    </ligand>
</feature>
<feature type="binding site" evidence="1">
    <location>
        <begin position="267"/>
        <end position="268"/>
    </location>
    <ligand>
        <name>deamido-NAD(+)</name>
        <dbReference type="ChEBI" id="CHEBI:58437"/>
    </ligand>
</feature>
<dbReference type="EC" id="6.3.1.5" evidence="1"/>
<dbReference type="EMBL" id="AE016853">
    <property type="protein sequence ID" value="AAO58350.1"/>
    <property type="molecule type" value="Genomic_DNA"/>
</dbReference>
<dbReference type="RefSeq" id="NP_794655.1">
    <property type="nucleotide sequence ID" value="NC_004578.1"/>
</dbReference>
<dbReference type="RefSeq" id="WP_005620808.1">
    <property type="nucleotide sequence ID" value="NC_004578.1"/>
</dbReference>
<dbReference type="SMR" id="Q87VL4"/>
<dbReference type="STRING" id="223283.PSPTO_4922"/>
<dbReference type="GeneID" id="61788226"/>
<dbReference type="KEGG" id="pst:PSPTO_4922"/>
<dbReference type="PATRIC" id="fig|223283.9.peg.5035"/>
<dbReference type="eggNOG" id="COG0171">
    <property type="taxonomic scope" value="Bacteria"/>
</dbReference>
<dbReference type="HOGENOM" id="CLU_059327_3_0_6"/>
<dbReference type="OrthoDB" id="3266517at2"/>
<dbReference type="PhylomeDB" id="Q87VL4"/>
<dbReference type="UniPathway" id="UPA00253">
    <property type="reaction ID" value="UER00333"/>
</dbReference>
<dbReference type="Proteomes" id="UP000002515">
    <property type="component" value="Chromosome"/>
</dbReference>
<dbReference type="GO" id="GO:0005737">
    <property type="term" value="C:cytoplasm"/>
    <property type="evidence" value="ECO:0007669"/>
    <property type="project" value="InterPro"/>
</dbReference>
<dbReference type="GO" id="GO:0005524">
    <property type="term" value="F:ATP binding"/>
    <property type="evidence" value="ECO:0007669"/>
    <property type="project" value="UniProtKB-UniRule"/>
</dbReference>
<dbReference type="GO" id="GO:0004359">
    <property type="term" value="F:glutaminase activity"/>
    <property type="evidence" value="ECO:0007669"/>
    <property type="project" value="InterPro"/>
</dbReference>
<dbReference type="GO" id="GO:0046872">
    <property type="term" value="F:metal ion binding"/>
    <property type="evidence" value="ECO:0007669"/>
    <property type="project" value="UniProtKB-KW"/>
</dbReference>
<dbReference type="GO" id="GO:0003952">
    <property type="term" value="F:NAD+ synthase (glutamine-hydrolyzing) activity"/>
    <property type="evidence" value="ECO:0007669"/>
    <property type="project" value="InterPro"/>
</dbReference>
<dbReference type="GO" id="GO:0008795">
    <property type="term" value="F:NAD+ synthase activity"/>
    <property type="evidence" value="ECO:0007669"/>
    <property type="project" value="UniProtKB-UniRule"/>
</dbReference>
<dbReference type="GO" id="GO:0009435">
    <property type="term" value="P:NAD biosynthetic process"/>
    <property type="evidence" value="ECO:0007669"/>
    <property type="project" value="UniProtKB-UniRule"/>
</dbReference>
<dbReference type="CDD" id="cd00553">
    <property type="entry name" value="NAD_synthase"/>
    <property type="match status" value="1"/>
</dbReference>
<dbReference type="Gene3D" id="3.40.50.620">
    <property type="entry name" value="HUPs"/>
    <property type="match status" value="1"/>
</dbReference>
<dbReference type="HAMAP" id="MF_00193">
    <property type="entry name" value="NadE_ammonia_dep"/>
    <property type="match status" value="1"/>
</dbReference>
<dbReference type="InterPro" id="IPR022310">
    <property type="entry name" value="NAD/GMP_synthase"/>
</dbReference>
<dbReference type="InterPro" id="IPR003694">
    <property type="entry name" value="NAD_synthase"/>
</dbReference>
<dbReference type="InterPro" id="IPR022926">
    <property type="entry name" value="NH(3)-dep_NAD(+)_synth"/>
</dbReference>
<dbReference type="InterPro" id="IPR014729">
    <property type="entry name" value="Rossmann-like_a/b/a_fold"/>
</dbReference>
<dbReference type="NCBIfam" id="TIGR00552">
    <property type="entry name" value="nadE"/>
    <property type="match status" value="1"/>
</dbReference>
<dbReference type="NCBIfam" id="NF001979">
    <property type="entry name" value="PRK00768.1"/>
    <property type="match status" value="1"/>
</dbReference>
<dbReference type="PANTHER" id="PTHR23090">
    <property type="entry name" value="NH 3 /GLUTAMINE-DEPENDENT NAD + SYNTHETASE"/>
    <property type="match status" value="1"/>
</dbReference>
<dbReference type="PANTHER" id="PTHR23090:SF7">
    <property type="entry name" value="NH(3)-DEPENDENT NAD(+) SYNTHETASE"/>
    <property type="match status" value="1"/>
</dbReference>
<dbReference type="Pfam" id="PF02540">
    <property type="entry name" value="NAD_synthase"/>
    <property type="match status" value="1"/>
</dbReference>
<dbReference type="SUPFAM" id="SSF52402">
    <property type="entry name" value="Adenine nucleotide alpha hydrolases-like"/>
    <property type="match status" value="1"/>
</dbReference>
<protein>
    <recommendedName>
        <fullName evidence="1">NH(3)-dependent NAD(+) synthetase</fullName>
        <ecNumber evidence="1">6.3.1.5</ecNumber>
    </recommendedName>
</protein>
<keyword id="KW-0067">ATP-binding</keyword>
<keyword id="KW-0436">Ligase</keyword>
<keyword id="KW-0460">Magnesium</keyword>
<keyword id="KW-0479">Metal-binding</keyword>
<keyword id="KW-0520">NAD</keyword>
<keyword id="KW-0547">Nucleotide-binding</keyword>
<keyword id="KW-1185">Reference proteome</keyword>
<accession>Q87VL4</accession>
<name>NADE_PSESM</name>